<organism>
    <name type="scientific">Cytophaga hutchinsonii (strain ATCC 33406 / DSM 1761 / CIP 103989 / NBRC 15051 / NCIMB 9469 / D465)</name>
    <dbReference type="NCBI Taxonomy" id="269798"/>
    <lineage>
        <taxon>Bacteria</taxon>
        <taxon>Pseudomonadati</taxon>
        <taxon>Bacteroidota</taxon>
        <taxon>Cytophagia</taxon>
        <taxon>Cytophagales</taxon>
        <taxon>Cytophagaceae</taxon>
        <taxon>Cytophaga</taxon>
    </lineage>
</organism>
<sequence length="182" mass="19842">METTVKIKKSVLKRQKIAAAKEAAAKGAVKAHLNNVPTSTRKMRLVADLVRGQRVTLALGILKYQAKQGARKLEKLVLGSVADWQAKNSEARVEDADLYIREIFVDGGRVLKRLRTAPQGRAYRVRKRSNHITIVIDSLKELPAAPVAVVEEKEVVATAAAKPKATAKKATGEKSKAKTKAN</sequence>
<accession>Q11QB7</accession>
<reference key="1">
    <citation type="journal article" date="2007" name="Appl. Environ. Microbiol.">
        <title>Genome sequence of the cellulolytic gliding bacterium Cytophaga hutchinsonii.</title>
        <authorList>
            <person name="Xie G."/>
            <person name="Bruce D.C."/>
            <person name="Challacombe J.F."/>
            <person name="Chertkov O."/>
            <person name="Detter J.C."/>
            <person name="Gilna P."/>
            <person name="Han C.S."/>
            <person name="Lucas S."/>
            <person name="Misra M."/>
            <person name="Myers G.L."/>
            <person name="Richardson P."/>
            <person name="Tapia R."/>
            <person name="Thayer N."/>
            <person name="Thompson L.S."/>
            <person name="Brettin T.S."/>
            <person name="Henrissat B."/>
            <person name="Wilson D.B."/>
            <person name="McBride M.J."/>
        </authorList>
    </citation>
    <scope>NUCLEOTIDE SEQUENCE [LARGE SCALE GENOMIC DNA]</scope>
    <source>
        <strain>ATCC 33406 / DSM 1761 / JCM 20678 / CIP 103989 / IAM 12607 / NBRC 15051 / NCIMB 9469 / D465</strain>
    </source>
</reference>
<proteinExistence type="inferred from homology"/>
<dbReference type="EMBL" id="CP000383">
    <property type="protein sequence ID" value="ABG60397.1"/>
    <property type="molecule type" value="Genomic_DNA"/>
</dbReference>
<dbReference type="RefSeq" id="WP_011586506.1">
    <property type="nucleotide sequence ID" value="NC_008255.1"/>
</dbReference>
<dbReference type="SMR" id="Q11QB7"/>
<dbReference type="STRING" id="269798.CHU_3157"/>
<dbReference type="KEGG" id="chu:CHU_3157"/>
<dbReference type="eggNOG" id="COG0091">
    <property type="taxonomic scope" value="Bacteria"/>
</dbReference>
<dbReference type="HOGENOM" id="CLU_083987_3_3_10"/>
<dbReference type="OrthoDB" id="9805969at2"/>
<dbReference type="Proteomes" id="UP000001822">
    <property type="component" value="Chromosome"/>
</dbReference>
<dbReference type="GO" id="GO:0022625">
    <property type="term" value="C:cytosolic large ribosomal subunit"/>
    <property type="evidence" value="ECO:0007669"/>
    <property type="project" value="TreeGrafter"/>
</dbReference>
<dbReference type="GO" id="GO:0019843">
    <property type="term" value="F:rRNA binding"/>
    <property type="evidence" value="ECO:0007669"/>
    <property type="project" value="UniProtKB-UniRule"/>
</dbReference>
<dbReference type="GO" id="GO:0003735">
    <property type="term" value="F:structural constituent of ribosome"/>
    <property type="evidence" value="ECO:0007669"/>
    <property type="project" value="InterPro"/>
</dbReference>
<dbReference type="GO" id="GO:0006412">
    <property type="term" value="P:translation"/>
    <property type="evidence" value="ECO:0007669"/>
    <property type="project" value="UniProtKB-UniRule"/>
</dbReference>
<dbReference type="CDD" id="cd00336">
    <property type="entry name" value="Ribosomal_L22"/>
    <property type="match status" value="1"/>
</dbReference>
<dbReference type="Gene3D" id="3.90.470.10">
    <property type="entry name" value="Ribosomal protein L22/L17"/>
    <property type="match status" value="1"/>
</dbReference>
<dbReference type="HAMAP" id="MF_01331_B">
    <property type="entry name" value="Ribosomal_uL22_B"/>
    <property type="match status" value="1"/>
</dbReference>
<dbReference type="InterPro" id="IPR001063">
    <property type="entry name" value="Ribosomal_uL22"/>
</dbReference>
<dbReference type="InterPro" id="IPR005727">
    <property type="entry name" value="Ribosomal_uL22_bac/chlpt-type"/>
</dbReference>
<dbReference type="InterPro" id="IPR047867">
    <property type="entry name" value="Ribosomal_uL22_bac/org-type"/>
</dbReference>
<dbReference type="InterPro" id="IPR036394">
    <property type="entry name" value="Ribosomal_uL22_sf"/>
</dbReference>
<dbReference type="NCBIfam" id="TIGR01044">
    <property type="entry name" value="rplV_bact"/>
    <property type="match status" value="1"/>
</dbReference>
<dbReference type="PANTHER" id="PTHR13501">
    <property type="entry name" value="CHLOROPLAST 50S RIBOSOMAL PROTEIN L22-RELATED"/>
    <property type="match status" value="1"/>
</dbReference>
<dbReference type="PANTHER" id="PTHR13501:SF8">
    <property type="entry name" value="LARGE RIBOSOMAL SUBUNIT PROTEIN UL22M"/>
    <property type="match status" value="1"/>
</dbReference>
<dbReference type="Pfam" id="PF00237">
    <property type="entry name" value="Ribosomal_L22"/>
    <property type="match status" value="1"/>
</dbReference>
<dbReference type="SUPFAM" id="SSF54843">
    <property type="entry name" value="Ribosomal protein L22"/>
    <property type="match status" value="1"/>
</dbReference>
<feature type="chain" id="PRO_0000354460" description="Large ribosomal subunit protein uL22">
    <location>
        <begin position="1"/>
        <end position="182"/>
    </location>
</feature>
<feature type="region of interest" description="Disordered" evidence="2">
    <location>
        <begin position="159"/>
        <end position="182"/>
    </location>
</feature>
<keyword id="KW-1185">Reference proteome</keyword>
<keyword id="KW-0687">Ribonucleoprotein</keyword>
<keyword id="KW-0689">Ribosomal protein</keyword>
<keyword id="KW-0694">RNA-binding</keyword>
<keyword id="KW-0699">rRNA-binding</keyword>
<protein>
    <recommendedName>
        <fullName evidence="1">Large ribosomal subunit protein uL22</fullName>
    </recommendedName>
    <alternativeName>
        <fullName evidence="3">50S ribosomal protein L22</fullName>
    </alternativeName>
</protein>
<evidence type="ECO:0000255" key="1">
    <source>
        <dbReference type="HAMAP-Rule" id="MF_01331"/>
    </source>
</evidence>
<evidence type="ECO:0000256" key="2">
    <source>
        <dbReference type="SAM" id="MobiDB-lite"/>
    </source>
</evidence>
<evidence type="ECO:0000305" key="3"/>
<comment type="function">
    <text evidence="1">This protein binds specifically to 23S rRNA; its binding is stimulated by other ribosomal proteins, e.g. L4, L17, and L20. It is important during the early stages of 50S assembly. It makes multiple contacts with different domains of the 23S rRNA in the assembled 50S subunit and ribosome (By similarity).</text>
</comment>
<comment type="function">
    <text evidence="1">The globular domain of the protein is located near the polypeptide exit tunnel on the outside of the subunit, while an extended beta-hairpin is found that lines the wall of the exit tunnel in the center of the 70S ribosome.</text>
</comment>
<comment type="subunit">
    <text evidence="1">Part of the 50S ribosomal subunit.</text>
</comment>
<comment type="similarity">
    <text evidence="1">Belongs to the universal ribosomal protein uL22 family.</text>
</comment>
<gene>
    <name evidence="1" type="primary">rplV</name>
    <name type="ordered locus">CHU_3157</name>
</gene>
<name>RL22_CYTH3</name>